<name>RUSD3_HUMAN</name>
<reference key="1">
    <citation type="journal article" date="2004" name="Nat. Genet.">
        <title>Complete sequencing and characterization of 21,243 full-length human cDNAs.</title>
        <authorList>
            <person name="Ota T."/>
            <person name="Suzuki Y."/>
            <person name="Nishikawa T."/>
            <person name="Otsuki T."/>
            <person name="Sugiyama T."/>
            <person name="Irie R."/>
            <person name="Wakamatsu A."/>
            <person name="Hayashi K."/>
            <person name="Sato H."/>
            <person name="Nagai K."/>
            <person name="Kimura K."/>
            <person name="Makita H."/>
            <person name="Sekine M."/>
            <person name="Obayashi M."/>
            <person name="Nishi T."/>
            <person name="Shibahara T."/>
            <person name="Tanaka T."/>
            <person name="Ishii S."/>
            <person name="Yamamoto J."/>
            <person name="Saito K."/>
            <person name="Kawai Y."/>
            <person name="Isono Y."/>
            <person name="Nakamura Y."/>
            <person name="Nagahari K."/>
            <person name="Murakami K."/>
            <person name="Yasuda T."/>
            <person name="Iwayanagi T."/>
            <person name="Wagatsuma M."/>
            <person name="Shiratori A."/>
            <person name="Sudo H."/>
            <person name="Hosoiri T."/>
            <person name="Kaku Y."/>
            <person name="Kodaira H."/>
            <person name="Kondo H."/>
            <person name="Sugawara M."/>
            <person name="Takahashi M."/>
            <person name="Kanda K."/>
            <person name="Yokoi T."/>
            <person name="Furuya T."/>
            <person name="Kikkawa E."/>
            <person name="Omura Y."/>
            <person name="Abe K."/>
            <person name="Kamihara K."/>
            <person name="Katsuta N."/>
            <person name="Sato K."/>
            <person name="Tanikawa M."/>
            <person name="Yamazaki M."/>
            <person name="Ninomiya K."/>
            <person name="Ishibashi T."/>
            <person name="Yamashita H."/>
            <person name="Murakawa K."/>
            <person name="Fujimori K."/>
            <person name="Tanai H."/>
            <person name="Kimata M."/>
            <person name="Watanabe M."/>
            <person name="Hiraoka S."/>
            <person name="Chiba Y."/>
            <person name="Ishida S."/>
            <person name="Ono Y."/>
            <person name="Takiguchi S."/>
            <person name="Watanabe S."/>
            <person name="Yosida M."/>
            <person name="Hotuta T."/>
            <person name="Kusano J."/>
            <person name="Kanehori K."/>
            <person name="Takahashi-Fujii A."/>
            <person name="Hara H."/>
            <person name="Tanase T.-O."/>
            <person name="Nomura Y."/>
            <person name="Togiya S."/>
            <person name="Komai F."/>
            <person name="Hara R."/>
            <person name="Takeuchi K."/>
            <person name="Arita M."/>
            <person name="Imose N."/>
            <person name="Musashino K."/>
            <person name="Yuuki H."/>
            <person name="Oshima A."/>
            <person name="Sasaki N."/>
            <person name="Aotsuka S."/>
            <person name="Yoshikawa Y."/>
            <person name="Matsunawa H."/>
            <person name="Ichihara T."/>
            <person name="Shiohata N."/>
            <person name="Sano S."/>
            <person name="Moriya S."/>
            <person name="Momiyama H."/>
            <person name="Satoh N."/>
            <person name="Takami S."/>
            <person name="Terashima Y."/>
            <person name="Suzuki O."/>
            <person name="Nakagawa S."/>
            <person name="Senoh A."/>
            <person name="Mizoguchi H."/>
            <person name="Goto Y."/>
            <person name="Shimizu F."/>
            <person name="Wakebe H."/>
            <person name="Hishigaki H."/>
            <person name="Watanabe T."/>
            <person name="Sugiyama A."/>
            <person name="Takemoto M."/>
            <person name="Kawakami B."/>
            <person name="Yamazaki M."/>
            <person name="Watanabe K."/>
            <person name="Kumagai A."/>
            <person name="Itakura S."/>
            <person name="Fukuzumi Y."/>
            <person name="Fujimori Y."/>
            <person name="Komiyama M."/>
            <person name="Tashiro H."/>
            <person name="Tanigami A."/>
            <person name="Fujiwara T."/>
            <person name="Ono T."/>
            <person name="Yamada K."/>
            <person name="Fujii Y."/>
            <person name="Ozaki K."/>
            <person name="Hirao M."/>
            <person name="Ohmori Y."/>
            <person name="Kawabata A."/>
            <person name="Hikiji T."/>
            <person name="Kobatake N."/>
            <person name="Inagaki H."/>
            <person name="Ikema Y."/>
            <person name="Okamoto S."/>
            <person name="Okitani R."/>
            <person name="Kawakami T."/>
            <person name="Noguchi S."/>
            <person name="Itoh T."/>
            <person name="Shigeta K."/>
            <person name="Senba T."/>
            <person name="Matsumura K."/>
            <person name="Nakajima Y."/>
            <person name="Mizuno T."/>
            <person name="Morinaga M."/>
            <person name="Sasaki M."/>
            <person name="Togashi T."/>
            <person name="Oyama M."/>
            <person name="Hata H."/>
            <person name="Watanabe M."/>
            <person name="Komatsu T."/>
            <person name="Mizushima-Sugano J."/>
            <person name="Satoh T."/>
            <person name="Shirai Y."/>
            <person name="Takahashi Y."/>
            <person name="Nakagawa K."/>
            <person name="Okumura K."/>
            <person name="Nagase T."/>
            <person name="Nomura N."/>
            <person name="Kikuchi H."/>
            <person name="Masuho Y."/>
            <person name="Yamashita R."/>
            <person name="Nakai K."/>
            <person name="Yada T."/>
            <person name="Nakamura Y."/>
            <person name="Ohara O."/>
            <person name="Isogai T."/>
            <person name="Sugano S."/>
        </authorList>
    </citation>
    <scope>NUCLEOTIDE SEQUENCE [LARGE SCALE MRNA] (ISOFORMS 3 AND 4)</scope>
    <source>
        <tissue>Brain</tissue>
    </source>
</reference>
<reference key="2">
    <citation type="journal article" date="2006" name="Nature">
        <title>The DNA sequence, annotation and analysis of human chromosome 3.</title>
        <authorList>
            <person name="Muzny D.M."/>
            <person name="Scherer S.E."/>
            <person name="Kaul R."/>
            <person name="Wang J."/>
            <person name="Yu J."/>
            <person name="Sudbrak R."/>
            <person name="Buhay C.J."/>
            <person name="Chen R."/>
            <person name="Cree A."/>
            <person name="Ding Y."/>
            <person name="Dugan-Rocha S."/>
            <person name="Gill R."/>
            <person name="Gunaratne P."/>
            <person name="Harris R.A."/>
            <person name="Hawes A.C."/>
            <person name="Hernandez J."/>
            <person name="Hodgson A.V."/>
            <person name="Hume J."/>
            <person name="Jackson A."/>
            <person name="Khan Z.M."/>
            <person name="Kovar-Smith C."/>
            <person name="Lewis L.R."/>
            <person name="Lozado R.J."/>
            <person name="Metzker M.L."/>
            <person name="Milosavljevic A."/>
            <person name="Miner G.R."/>
            <person name="Morgan M.B."/>
            <person name="Nazareth L.V."/>
            <person name="Scott G."/>
            <person name="Sodergren E."/>
            <person name="Song X.-Z."/>
            <person name="Steffen D."/>
            <person name="Wei S."/>
            <person name="Wheeler D.A."/>
            <person name="Wright M.W."/>
            <person name="Worley K.C."/>
            <person name="Yuan Y."/>
            <person name="Zhang Z."/>
            <person name="Adams C.Q."/>
            <person name="Ansari-Lari M.A."/>
            <person name="Ayele M."/>
            <person name="Brown M.J."/>
            <person name="Chen G."/>
            <person name="Chen Z."/>
            <person name="Clendenning J."/>
            <person name="Clerc-Blankenburg K.P."/>
            <person name="Chen R."/>
            <person name="Chen Z."/>
            <person name="Davis C."/>
            <person name="Delgado O."/>
            <person name="Dinh H.H."/>
            <person name="Dong W."/>
            <person name="Draper H."/>
            <person name="Ernst S."/>
            <person name="Fu G."/>
            <person name="Gonzalez-Garay M.L."/>
            <person name="Garcia D.K."/>
            <person name="Gillett W."/>
            <person name="Gu J."/>
            <person name="Hao B."/>
            <person name="Haugen E."/>
            <person name="Havlak P."/>
            <person name="He X."/>
            <person name="Hennig S."/>
            <person name="Hu S."/>
            <person name="Huang W."/>
            <person name="Jackson L.R."/>
            <person name="Jacob L.S."/>
            <person name="Kelly S.H."/>
            <person name="Kube M."/>
            <person name="Levy R."/>
            <person name="Li Z."/>
            <person name="Liu B."/>
            <person name="Liu J."/>
            <person name="Liu W."/>
            <person name="Lu J."/>
            <person name="Maheshwari M."/>
            <person name="Nguyen B.-V."/>
            <person name="Okwuonu G.O."/>
            <person name="Palmeiri A."/>
            <person name="Pasternak S."/>
            <person name="Perez L.M."/>
            <person name="Phelps K.A."/>
            <person name="Plopper F.J."/>
            <person name="Qiang B."/>
            <person name="Raymond C."/>
            <person name="Rodriguez R."/>
            <person name="Saenphimmachak C."/>
            <person name="Santibanez J."/>
            <person name="Shen H."/>
            <person name="Shen Y."/>
            <person name="Subramanian S."/>
            <person name="Tabor P.E."/>
            <person name="Verduzco D."/>
            <person name="Waldron L."/>
            <person name="Wang J."/>
            <person name="Wang J."/>
            <person name="Wang Q."/>
            <person name="Williams G.A."/>
            <person name="Wong G.K.-S."/>
            <person name="Yao Z."/>
            <person name="Zhang J."/>
            <person name="Zhang X."/>
            <person name="Zhao G."/>
            <person name="Zhou J."/>
            <person name="Zhou Y."/>
            <person name="Nelson D."/>
            <person name="Lehrach H."/>
            <person name="Reinhardt R."/>
            <person name="Naylor S.L."/>
            <person name="Yang H."/>
            <person name="Olson M."/>
            <person name="Weinstock G."/>
            <person name="Gibbs R.A."/>
        </authorList>
    </citation>
    <scope>NUCLEOTIDE SEQUENCE [LARGE SCALE GENOMIC DNA]</scope>
</reference>
<reference key="3">
    <citation type="submission" date="2005-07" db="EMBL/GenBank/DDBJ databases">
        <authorList>
            <person name="Mural R.J."/>
            <person name="Istrail S."/>
            <person name="Sutton G."/>
            <person name="Florea L."/>
            <person name="Halpern A.L."/>
            <person name="Mobarry C.M."/>
            <person name="Lippert R."/>
            <person name="Walenz B."/>
            <person name="Shatkay H."/>
            <person name="Dew I."/>
            <person name="Miller J.R."/>
            <person name="Flanigan M.J."/>
            <person name="Edwards N.J."/>
            <person name="Bolanos R."/>
            <person name="Fasulo D."/>
            <person name="Halldorsson B.V."/>
            <person name="Hannenhalli S."/>
            <person name="Turner R."/>
            <person name="Yooseph S."/>
            <person name="Lu F."/>
            <person name="Nusskern D.R."/>
            <person name="Shue B.C."/>
            <person name="Zheng X.H."/>
            <person name="Zhong F."/>
            <person name="Delcher A.L."/>
            <person name="Huson D.H."/>
            <person name="Kravitz S.A."/>
            <person name="Mouchard L."/>
            <person name="Reinert K."/>
            <person name="Remington K.A."/>
            <person name="Clark A.G."/>
            <person name="Waterman M.S."/>
            <person name="Eichler E.E."/>
            <person name="Adams M.D."/>
            <person name="Hunkapiller M.W."/>
            <person name="Myers E.W."/>
            <person name="Venter J.C."/>
        </authorList>
    </citation>
    <scope>NUCLEOTIDE SEQUENCE [LARGE SCALE GENOMIC DNA]</scope>
</reference>
<reference key="4">
    <citation type="journal article" date="2004" name="Genome Res.">
        <title>The status, quality, and expansion of the NIH full-length cDNA project: the Mammalian Gene Collection (MGC).</title>
        <authorList>
            <consortium name="The MGC Project Team"/>
        </authorList>
    </citation>
    <scope>NUCLEOTIDE SEQUENCE [LARGE SCALE MRNA] (ISOFORMS 5 AND 6)</scope>
    <scope>VARIANT HIS-34</scope>
    <source>
        <tissue>Bone marrow</tissue>
        <tissue>Brain</tissue>
        <tissue>Eye</tissue>
    </source>
</reference>
<reference key="5">
    <citation type="journal article" date="2011" name="BMC Syst. Biol.">
        <title>Initial characterization of the human central proteome.</title>
        <authorList>
            <person name="Burkard T.R."/>
            <person name="Planyavsky M."/>
            <person name="Kaupe I."/>
            <person name="Breitwieser F.P."/>
            <person name="Buerckstuemmer T."/>
            <person name="Bennett K.L."/>
            <person name="Superti-Furga G."/>
            <person name="Colinge J."/>
        </authorList>
    </citation>
    <scope>IDENTIFICATION BY MASS SPECTROMETRY [LARGE SCALE ANALYSIS]</scope>
</reference>
<reference key="6">
    <citation type="journal article" date="2013" name="J. Proteome Res.">
        <title>Toward a comprehensive characterization of a human cancer cell phosphoproteome.</title>
        <authorList>
            <person name="Zhou H."/>
            <person name="Di Palma S."/>
            <person name="Preisinger C."/>
            <person name="Peng M."/>
            <person name="Polat A.N."/>
            <person name="Heck A.J."/>
            <person name="Mohammed S."/>
        </authorList>
    </citation>
    <scope>PHOSPHORYLATION [LARGE SCALE ANALYSIS] AT SER-71</scope>
    <scope>IDENTIFICATION BY MASS SPECTROMETRY [LARGE SCALE ANALYSIS]</scope>
    <source>
        <tissue>Erythroleukemia</tissue>
    </source>
</reference>
<reference key="7">
    <citation type="journal article" date="2015" name="Proteomics">
        <title>N-terminome analysis of the human mitochondrial proteome.</title>
        <authorList>
            <person name="Vaca Jacome A.S."/>
            <person name="Rabilloud T."/>
            <person name="Schaeffer-Reiss C."/>
            <person name="Rompais M."/>
            <person name="Ayoub D."/>
            <person name="Lane L."/>
            <person name="Bairoch A."/>
            <person name="Van Dorsselaer A."/>
            <person name="Carapito C."/>
        </authorList>
    </citation>
    <scope>IDENTIFICATION BY MASS SPECTROMETRY [LARGE SCALE ANALYSIS]</scope>
</reference>
<reference key="8">
    <citation type="journal article" date="2016" name="Cell Metab.">
        <title>A Genome-wide CRISPR Death Screen Identifies Genes Essential for Oxidative Phosphorylation.</title>
        <authorList>
            <person name="Arroyo J.D."/>
            <person name="Jourdain A.A."/>
            <person name="Calvo S.E."/>
            <person name="Ballarano C.A."/>
            <person name="Doench J.G."/>
            <person name="Root D.E."/>
            <person name="Mootha V.K."/>
        </authorList>
    </citation>
    <scope>SUBUNIT</scope>
    <scope>FUNCTION</scope>
</reference>
<reference key="9">
    <citation type="journal article" date="2017" name="EMBO Rep.">
        <title>A pseudouridine synthase module is essential for mitochondrial protein synthesis and cell viability.</title>
        <authorList>
            <person name="Antonicka H."/>
            <person name="Choquet K."/>
            <person name="Lin Z.Y."/>
            <person name="Gingras A.C."/>
            <person name="Kleinman C.L."/>
            <person name="Shoubridge E.A."/>
        </authorList>
    </citation>
    <scope>FUNCTION</scope>
    <scope>SUBCELLULAR LOCATION</scope>
    <scope>CATALYTIC ACTIVITY</scope>
</reference>
<reference key="10">
    <citation type="journal article" date="2017" name="J. Biol. Chem.">
        <title>The pseudouridine synthase RPUSD4 is an essential component of mitochondrial RNA granules.</title>
        <authorList>
            <person name="Zaganelli S."/>
            <person name="Rebelo-Guiomar P."/>
            <person name="Maundrell K."/>
            <person name="Rozanska A."/>
            <person name="Pierredon S."/>
            <person name="Powell C.A."/>
            <person name="Jourdain A.A."/>
            <person name="Hulo N."/>
            <person name="Lightowlers R.N."/>
            <person name="Chrzanowska-Lightowlers Z.M."/>
            <person name="Minczuk M."/>
            <person name="Martinou J.C."/>
        </authorList>
    </citation>
    <scope>SUBCELLULAR LOCATION</scope>
</reference>
<protein>
    <recommendedName>
        <fullName>Mitochondrial mRNA pseudouridine synthase RPUSD3</fullName>
        <ecNumber evidence="5">5.4.99.-</ecNumber>
    </recommendedName>
    <alternativeName>
        <fullName>RNA pseudouridylate synthase domain-containing protein 3</fullName>
    </alternativeName>
</protein>
<organism>
    <name type="scientific">Homo sapiens</name>
    <name type="common">Human</name>
    <dbReference type="NCBI Taxonomy" id="9606"/>
    <lineage>
        <taxon>Eukaryota</taxon>
        <taxon>Metazoa</taxon>
        <taxon>Chordata</taxon>
        <taxon>Craniata</taxon>
        <taxon>Vertebrata</taxon>
        <taxon>Euteleostomi</taxon>
        <taxon>Mammalia</taxon>
        <taxon>Eutheria</taxon>
        <taxon>Euarchontoglires</taxon>
        <taxon>Primates</taxon>
        <taxon>Haplorrhini</taxon>
        <taxon>Catarrhini</taxon>
        <taxon>Hominidae</taxon>
        <taxon>Homo</taxon>
    </lineage>
</organism>
<proteinExistence type="evidence at protein level"/>
<keyword id="KW-0024">Alternative initiation</keyword>
<keyword id="KW-0025">Alternative splicing</keyword>
<keyword id="KW-0413">Isomerase</keyword>
<keyword id="KW-0496">Mitochondrion</keyword>
<keyword id="KW-0507">mRNA processing</keyword>
<keyword id="KW-0597">Phosphoprotein</keyword>
<keyword id="KW-1267">Proteomics identification</keyword>
<keyword id="KW-1185">Reference proteome</keyword>
<keyword id="KW-0809">Transit peptide</keyword>
<evidence type="ECO:0000255" key="1"/>
<evidence type="ECO:0000256" key="2">
    <source>
        <dbReference type="SAM" id="MobiDB-lite"/>
    </source>
</evidence>
<evidence type="ECO:0000269" key="3">
    <source>
    </source>
</evidence>
<evidence type="ECO:0000269" key="4">
    <source>
    </source>
</evidence>
<evidence type="ECO:0000269" key="5">
    <source>
    </source>
</evidence>
<evidence type="ECO:0000269" key="6">
    <source>
    </source>
</evidence>
<evidence type="ECO:0000303" key="7">
    <source>
    </source>
</evidence>
<evidence type="ECO:0000303" key="8">
    <source>
    </source>
</evidence>
<evidence type="ECO:0000303" key="9">
    <source>
    </source>
</evidence>
<evidence type="ECO:0000305" key="10"/>
<evidence type="ECO:0000305" key="11">
    <source>
    </source>
</evidence>
<evidence type="ECO:0000312" key="12">
    <source>
        <dbReference type="HGNC" id="HGNC:28437"/>
    </source>
</evidence>
<evidence type="ECO:0007744" key="13">
    <source>
    </source>
</evidence>
<gene>
    <name evidence="9 12" type="primary">RPUSD3</name>
</gene>
<comment type="function">
    <text evidence="4 5">Catalyzes uridine to pseudouridine isomerization (pseudouridylation) of specific mitochondrial mRNAs (mt-mRNAs), a post-transcriptional modification necessary for their translation. Acts at position 390 in COXI mt-mRNA and at position 697-699 in mitochondrial COXIII mt-mRNA (PubMed:27974379). As a component of a functional protein-RNA module, consisting of RCC1L, NGRN, RPUSD3, RPUSD4, TRUB2, FASTKD2 and 16S mitochondrial ribosomal RNA (16S mt-rRNA), controls 16S mt-rRNA abundance and may play a role in mitochondrial ribosome biogenesis (PubMed:27667664).</text>
</comment>
<comment type="catalytic activity">
    <reaction evidence="11">
        <text>a uridine in mRNA = a pseudouridine in mRNA</text>
        <dbReference type="Rhea" id="RHEA:56644"/>
        <dbReference type="Rhea" id="RHEA-COMP:14658"/>
        <dbReference type="Rhea" id="RHEA-COMP:14659"/>
        <dbReference type="ChEBI" id="CHEBI:65314"/>
        <dbReference type="ChEBI" id="CHEBI:65315"/>
    </reaction>
</comment>
<comment type="subunit">
    <text evidence="4">Forms a regulatory protein-RNA complex, consisting of RCC1L, NGRN, RPUSD3, RPUSD4, TRUB2, FASTKD2 and 16S mt-rRNA.</text>
</comment>
<comment type="interaction">
    <interactant intactId="EBI-5458784">
        <id>Q6P087</id>
    </interactant>
    <interactant intactId="EBI-3867333">
        <id>A8MQ03</id>
        <label>CYSRT1</label>
    </interactant>
    <organismsDiffer>false</organismsDiffer>
    <experiments>3</experiments>
</comment>
<comment type="interaction">
    <interactant intactId="EBI-5458784">
        <id>Q6P087</id>
    </interactant>
    <interactant intactId="EBI-948001">
        <id>Q15323</id>
        <label>KRT31</label>
    </interactant>
    <organismsDiffer>false</organismsDiffer>
    <experiments>3</experiments>
</comment>
<comment type="interaction">
    <interactant intactId="EBI-5458784">
        <id>Q6P087</id>
    </interactant>
    <interactant intactId="EBI-11959885">
        <id>Q07627</id>
        <label>KRTAP1-1</label>
    </interactant>
    <organismsDiffer>false</organismsDiffer>
    <experiments>3</experiments>
</comment>
<comment type="interaction">
    <interactant intactId="EBI-5458784">
        <id>Q6P087</id>
    </interactant>
    <interactant intactId="EBI-10172290">
        <id>P60409</id>
        <label>KRTAP10-7</label>
    </interactant>
    <organismsDiffer>false</organismsDiffer>
    <experiments>3</experiments>
</comment>
<comment type="subcellular location">
    <subcellularLocation>
        <location evidence="5">Mitochondrion matrix</location>
    </subcellularLocation>
    <text evidence="5 6">Localizes to mitochondrial RNA granules, platforms for post-transcriptional RNA modification and ribosome assembly.</text>
</comment>
<comment type="alternative products">
    <event type="alternative splicing"/>
    <event type="alternative initiation"/>
    <isoform>
        <id>Q6P087-1</id>
        <name>1</name>
        <sequence type="displayed"/>
    </isoform>
    <isoform>
        <id>Q6P087-2</id>
        <name>2</name>
        <sequence type="described" ref="VSP_027870"/>
    </isoform>
    <isoform>
        <id>Q6P087-3</id>
        <name>3</name>
        <sequence type="described" ref="VSP_027869"/>
    </isoform>
    <isoform>
        <id>Q6P087-4</id>
        <name>4</name>
        <sequence type="described" ref="VSP_062208 VSP_027869"/>
    </isoform>
    <isoform>
        <id>Q6P087-5</id>
        <name>5</name>
        <sequence type="described" ref="VSP_062208"/>
    </isoform>
    <isoform>
        <id>Q6P087-6</id>
        <name>6</name>
        <sequence type="described" ref="VSP_062208 VSP_027870"/>
    </isoform>
</comment>
<comment type="similarity">
    <text evidence="10">Belongs to the pseudouridine synthase RluA family.</text>
</comment>
<sequence length="351" mass="38461">MRAVLAREMDGRRVLGRFWSGWRRGLGVRPVPEDAGFGTEARHQRQPRGSCQRSGPLGDQPFAGLLPKNLSREELVDALRAAVVDRKGPLVTLNKPQGLPVTGKPGELTLFSVLPELSQSLGLREQELQVVRASGKESSGLVLLSSCPQTASRLQKYFTHARRAQRPTATYCAVTDGIPAASEGKIQAALKLEHIDGVNLTVPVKAPSRKDILEGVKKTLSHFRVVATGSGCALVQLQPLTVFSSQLQVHMVLQLCPVLGDHMYSARVGTVLGQRFLLPAENNKPQRQVLDEALLRRLHLTPSQAAQLPLHLHLHRLLLPGTRARDTPVELLAPLPPYFSRTLQCLGLRLQ</sequence>
<accession>Q6P087</accession>
<accession>B4DS39</accession>
<accession>Q6P6A9</accession>
<accession>Q8N1B2</accession>
<accession>Q8NAV3</accession>
<feature type="transit peptide" description="Mitochondrion" evidence="1">
    <location>
        <begin position="1"/>
        <end position="25"/>
    </location>
</feature>
<feature type="chain" id="PRO_0000300822" description="Mitochondrial mRNA pseudouridine synthase RPUSD3">
    <location>
        <begin position="26"/>
        <end position="351"/>
    </location>
</feature>
<feature type="region of interest" description="Disordered" evidence="2">
    <location>
        <begin position="33"/>
        <end position="58"/>
    </location>
</feature>
<feature type="modified residue" description="Phosphoserine" evidence="13">
    <location>
        <position position="71"/>
    </location>
</feature>
<feature type="splice variant" id="VSP_062208" description="In isoform 4, isoform 5 and isoform 6.">
    <location>
        <begin position="1"/>
        <end position="8"/>
    </location>
</feature>
<feature type="splice variant" id="VSP_027870" description="In isoform 2 and isoform 6." evidence="8">
    <location>
        <begin position="89"/>
        <end position="103"/>
    </location>
</feature>
<feature type="splice variant" id="VSP_027869" description="In isoform 3 and isoform 4." evidence="7">
    <location>
        <begin position="137"/>
        <end position="351"/>
    </location>
</feature>
<feature type="sequence variant" id="VAR_034885" description="In dbSNP:rs17855991." evidence="3">
    <original>D</original>
    <variation>H</variation>
    <location>
        <position position="34"/>
    </location>
</feature>
<feature type="sequence variant" id="VAR_059763" description="In dbSNP:rs34244989.">
    <original>A</original>
    <variation>P</variation>
    <location>
        <position position="173"/>
    </location>
</feature>
<feature type="sequence variant" id="VAR_034886" description="In dbSNP:rs34244989.">
    <original>A</original>
    <variation>P</variation>
    <location>
        <position position="181"/>
    </location>
</feature>
<dbReference type="EC" id="5.4.99.-" evidence="5"/>
<dbReference type="EMBL" id="AK092026">
    <property type="protein sequence ID" value="BAC03794.1"/>
    <property type="molecule type" value="mRNA"/>
</dbReference>
<dbReference type="EMBL" id="AK299556">
    <property type="protein sequence ID" value="BAG61501.1"/>
    <property type="molecule type" value="mRNA"/>
</dbReference>
<dbReference type="EMBL" id="AC018809">
    <property type="status" value="NOT_ANNOTATED_CDS"/>
    <property type="molecule type" value="Genomic_DNA"/>
</dbReference>
<dbReference type="EMBL" id="CH471055">
    <property type="protein sequence ID" value="EAW64008.1"/>
    <property type="molecule type" value="Genomic_DNA"/>
</dbReference>
<dbReference type="EMBL" id="BC032135">
    <property type="protein sequence ID" value="AAH32135.1"/>
    <property type="molecule type" value="mRNA"/>
</dbReference>
<dbReference type="EMBL" id="BC062362">
    <property type="protein sequence ID" value="AAH62362.1"/>
    <property type="molecule type" value="mRNA"/>
</dbReference>
<dbReference type="EMBL" id="BC065741">
    <property type="protein sequence ID" value="AAH65741.1"/>
    <property type="molecule type" value="mRNA"/>
</dbReference>
<dbReference type="CCDS" id="CCDS2586.3">
    <molecule id="Q6P087-5"/>
</dbReference>
<dbReference type="CCDS" id="CCDS46744.2">
    <molecule id="Q6P087-6"/>
</dbReference>
<dbReference type="RefSeq" id="NP_001136019.2">
    <molecule id="Q6P087-6"/>
    <property type="nucleotide sequence ID" value="NM_001142547.3"/>
</dbReference>
<dbReference type="RefSeq" id="NP_775930.3">
    <molecule id="Q6P087-5"/>
    <property type="nucleotide sequence ID" value="NM_173659.5"/>
</dbReference>
<dbReference type="SMR" id="Q6P087"/>
<dbReference type="BioGRID" id="130092">
    <property type="interactions" value="219"/>
</dbReference>
<dbReference type="CORUM" id="Q6P087"/>
<dbReference type="FunCoup" id="Q6P087">
    <property type="interactions" value="514"/>
</dbReference>
<dbReference type="IntAct" id="Q6P087">
    <property type="interactions" value="63"/>
</dbReference>
<dbReference type="MINT" id="Q6P087"/>
<dbReference type="STRING" id="9606.ENSP00000373331"/>
<dbReference type="iPTMnet" id="Q6P087"/>
<dbReference type="PhosphoSitePlus" id="Q6P087"/>
<dbReference type="SwissPalm" id="Q6P087"/>
<dbReference type="BioMuta" id="RPUSD3"/>
<dbReference type="DMDM" id="294862493"/>
<dbReference type="jPOST" id="Q6P087"/>
<dbReference type="MassIVE" id="Q6P087"/>
<dbReference type="PaxDb" id="9606-ENSP00000373331"/>
<dbReference type="PeptideAtlas" id="Q6P087"/>
<dbReference type="ProteomicsDB" id="66804">
    <molecule id="Q6P087-1"/>
</dbReference>
<dbReference type="ProteomicsDB" id="66805">
    <molecule id="Q6P087-2"/>
</dbReference>
<dbReference type="ProteomicsDB" id="66806">
    <molecule id="Q6P087-3"/>
</dbReference>
<dbReference type="Pumba" id="Q6P087"/>
<dbReference type="Antibodypedia" id="25685">
    <property type="antibodies" value="52 antibodies from 15 providers"/>
</dbReference>
<dbReference type="DNASU" id="285367"/>
<dbReference type="Ensembl" id="ENST00000383820.10">
    <molecule id="Q6P087-5"/>
    <property type="protein sequence ID" value="ENSP00000373331.6"/>
    <property type="gene ID" value="ENSG00000156990.14"/>
</dbReference>
<dbReference type="Ensembl" id="ENST00000433535.7">
    <molecule id="Q6P087-6"/>
    <property type="protein sequence ID" value="ENSP00000398921.3"/>
    <property type="gene ID" value="ENSG00000156990.14"/>
</dbReference>
<dbReference type="Ensembl" id="ENST00000433972.2">
    <molecule id="Q6P087-4"/>
    <property type="protein sequence ID" value="ENSP00000395446.2"/>
    <property type="gene ID" value="ENSG00000156990.14"/>
</dbReference>
<dbReference type="GeneID" id="285367"/>
<dbReference type="KEGG" id="hsa:285367"/>
<dbReference type="MANE-Select" id="ENST00000383820.10">
    <molecule id="Q6P087-5"/>
    <property type="protein sequence ID" value="ENSP00000373331.6"/>
    <property type="RefSeq nucleotide sequence ID" value="NM_173659.5"/>
    <property type="RefSeq protein sequence ID" value="NP_775930.3"/>
</dbReference>
<dbReference type="UCSC" id="uc011atk.3">
    <molecule id="Q6P087-1"/>
    <property type="organism name" value="human"/>
</dbReference>
<dbReference type="AGR" id="HGNC:28437"/>
<dbReference type="CTD" id="285367"/>
<dbReference type="GeneCards" id="RPUSD3"/>
<dbReference type="HGNC" id="HGNC:28437">
    <property type="gene designation" value="RPUSD3"/>
</dbReference>
<dbReference type="HPA" id="ENSG00000156990">
    <property type="expression patterns" value="Low tissue specificity"/>
</dbReference>
<dbReference type="MIM" id="617759">
    <property type="type" value="gene"/>
</dbReference>
<dbReference type="neXtProt" id="NX_Q6P087"/>
<dbReference type="OpenTargets" id="ENSG00000156990"/>
<dbReference type="PharmGKB" id="PA134924883"/>
<dbReference type="VEuPathDB" id="HostDB:ENSG00000156990"/>
<dbReference type="eggNOG" id="KOG1919">
    <property type="taxonomic scope" value="Eukaryota"/>
</dbReference>
<dbReference type="GeneTree" id="ENSGT00940000161059"/>
<dbReference type="HOGENOM" id="CLU_016902_2_0_1"/>
<dbReference type="InParanoid" id="Q6P087"/>
<dbReference type="OMA" id="PPAWYHL"/>
<dbReference type="OrthoDB" id="428658at2759"/>
<dbReference type="PAN-GO" id="Q6P087">
    <property type="GO annotations" value="2 GO annotations based on evolutionary models"/>
</dbReference>
<dbReference type="PhylomeDB" id="Q6P087"/>
<dbReference type="TreeFam" id="TF337899"/>
<dbReference type="PathwayCommons" id="Q6P087"/>
<dbReference type="SignaLink" id="Q6P087"/>
<dbReference type="BioGRID-ORCS" id="285367">
    <property type="hits" value="156 hits in 1160 CRISPR screens"/>
</dbReference>
<dbReference type="CD-CODE" id="5965E019">
    <property type="entry name" value="mtRNA granule"/>
</dbReference>
<dbReference type="ChiTaRS" id="RPUSD3">
    <property type="organism name" value="human"/>
</dbReference>
<dbReference type="GenomeRNAi" id="285367"/>
<dbReference type="Pharos" id="Q6P087">
    <property type="development level" value="Tdark"/>
</dbReference>
<dbReference type="PRO" id="PR:Q6P087"/>
<dbReference type="Proteomes" id="UP000005640">
    <property type="component" value="Chromosome 3"/>
</dbReference>
<dbReference type="RNAct" id="Q6P087">
    <property type="molecule type" value="protein"/>
</dbReference>
<dbReference type="Bgee" id="ENSG00000156990">
    <property type="expression patterns" value="Expressed in endothelial cell and 187 other cell types or tissues"/>
</dbReference>
<dbReference type="ExpressionAtlas" id="Q6P087">
    <property type="expression patterns" value="baseline and differential"/>
</dbReference>
<dbReference type="GO" id="GO:0005759">
    <property type="term" value="C:mitochondrial matrix"/>
    <property type="evidence" value="ECO:0000314"/>
    <property type="project" value="FlyBase"/>
</dbReference>
<dbReference type="GO" id="GO:0005739">
    <property type="term" value="C:mitochondrion"/>
    <property type="evidence" value="ECO:0000314"/>
    <property type="project" value="FlyBase"/>
</dbReference>
<dbReference type="GO" id="GO:0035770">
    <property type="term" value="C:ribonucleoprotein granule"/>
    <property type="evidence" value="ECO:0000314"/>
    <property type="project" value="FlyBase"/>
</dbReference>
<dbReference type="GO" id="GO:0009982">
    <property type="term" value="F:pseudouridine synthase activity"/>
    <property type="evidence" value="ECO:0007669"/>
    <property type="project" value="InterPro"/>
</dbReference>
<dbReference type="GO" id="GO:0003723">
    <property type="term" value="F:RNA binding"/>
    <property type="evidence" value="ECO:0007005"/>
    <property type="project" value="UniProtKB"/>
</dbReference>
<dbReference type="GO" id="GO:0006397">
    <property type="term" value="P:mRNA processing"/>
    <property type="evidence" value="ECO:0007669"/>
    <property type="project" value="UniProtKB-KW"/>
</dbReference>
<dbReference type="GO" id="GO:1990481">
    <property type="term" value="P:mRNA pseudouridine synthesis"/>
    <property type="evidence" value="ECO:0000315"/>
    <property type="project" value="FlyBase"/>
</dbReference>
<dbReference type="GO" id="GO:0070131">
    <property type="term" value="P:positive regulation of mitochondrial translation"/>
    <property type="evidence" value="ECO:0000315"/>
    <property type="project" value="UniProtKB"/>
</dbReference>
<dbReference type="CDD" id="cd02869">
    <property type="entry name" value="PseudoU_synth_RluA_like"/>
    <property type="match status" value="1"/>
</dbReference>
<dbReference type="Gene3D" id="3.30.2350.10">
    <property type="entry name" value="Pseudouridine synthase"/>
    <property type="match status" value="1"/>
</dbReference>
<dbReference type="InterPro" id="IPR020103">
    <property type="entry name" value="PsdUridine_synth_cat_dom_sf"/>
</dbReference>
<dbReference type="InterPro" id="IPR006145">
    <property type="entry name" value="PsdUridine_synth_RsuA/RluA"/>
</dbReference>
<dbReference type="InterPro" id="IPR050188">
    <property type="entry name" value="RluA_PseudoU_synthase"/>
</dbReference>
<dbReference type="PANTHER" id="PTHR21600:SF49">
    <property type="entry name" value="MITOCHONDRIAL MRNA PSEUDOURIDINE SYNTHASE RPUSD3"/>
    <property type="match status" value="1"/>
</dbReference>
<dbReference type="PANTHER" id="PTHR21600">
    <property type="entry name" value="MITOCHONDRIAL RNA PSEUDOURIDINE SYNTHASE"/>
    <property type="match status" value="1"/>
</dbReference>
<dbReference type="Pfam" id="PF00849">
    <property type="entry name" value="PseudoU_synth_2"/>
    <property type="match status" value="1"/>
</dbReference>
<dbReference type="SUPFAM" id="SSF55120">
    <property type="entry name" value="Pseudouridine synthase"/>
    <property type="match status" value="1"/>
</dbReference>